<sequence>MGSTGSVSAWDEALLIAAIQYPVPIIRGPEDIQVQVQQICKTMDSTKAGYPDLDFIVFPEYSAQGLNTKIWTYDEMLLSLDSPEIDCFRRACIRNDVWGVFSIMERNEDPSQIPYNTAIIINSNGEIVLHYRKLQPWVPIEPWMPGNLGMPVCEGPKGAKLAVCICHDGMFPELAREAAYKGCNVFIRISGYSTQVNDQWIWTNRTNAWQNLMYTVSVNLAGYDEVFYYFGEGTICNYDGNIIQQGQRNPWEIVTAELFPRLADKARENWALENSIFNLGCRGYVGKPGGERANYLTWVRDLANGEYKLPWDENIRIRDGWKYYPEGVKLGPLPKIDE</sequence>
<protein>
    <recommendedName>
        <fullName evidence="1">Formamidase</fullName>
        <ecNumber evidence="1">3.5.1.49</ecNumber>
    </recommendedName>
    <alternativeName>
        <fullName evidence="1">Formamide amidohydrolase</fullName>
    </alternativeName>
</protein>
<organism>
    <name type="scientific">Photorhabdus laumondii subsp. laumondii (strain DSM 15139 / CIP 105565 / TT01)</name>
    <name type="common">Photorhabdus luminescens subsp. laumondii</name>
    <dbReference type="NCBI Taxonomy" id="243265"/>
    <lineage>
        <taxon>Bacteria</taxon>
        <taxon>Pseudomonadati</taxon>
        <taxon>Pseudomonadota</taxon>
        <taxon>Gammaproteobacteria</taxon>
        <taxon>Enterobacterales</taxon>
        <taxon>Morganellaceae</taxon>
        <taxon>Photorhabdus</taxon>
    </lineage>
</organism>
<accession>Q7N278</accession>
<name>AMIF_PHOLL</name>
<gene>
    <name evidence="1" type="primary">amiF</name>
    <name type="ordered locus">plu3213</name>
</gene>
<dbReference type="EC" id="3.5.1.49" evidence="1"/>
<dbReference type="EMBL" id="BX571869">
    <property type="protein sequence ID" value="CAE15587.1"/>
    <property type="molecule type" value="Genomic_DNA"/>
</dbReference>
<dbReference type="RefSeq" id="WP_011147417.1">
    <property type="nucleotide sequence ID" value="NC_005126.1"/>
</dbReference>
<dbReference type="SMR" id="Q7N278"/>
<dbReference type="STRING" id="243265.plu3213"/>
<dbReference type="GeneID" id="48849474"/>
<dbReference type="KEGG" id="plu:plu3213"/>
<dbReference type="eggNOG" id="COG0388">
    <property type="taxonomic scope" value="Bacteria"/>
</dbReference>
<dbReference type="HOGENOM" id="CLU_071797_0_0_6"/>
<dbReference type="OrthoDB" id="9811121at2"/>
<dbReference type="Proteomes" id="UP000002514">
    <property type="component" value="Chromosome"/>
</dbReference>
<dbReference type="GO" id="GO:0004328">
    <property type="term" value="F:formamidase activity"/>
    <property type="evidence" value="ECO:0007669"/>
    <property type="project" value="UniProtKB-UniRule"/>
</dbReference>
<dbReference type="GO" id="GO:0050126">
    <property type="term" value="F:N-carbamoylputrescine amidase activity"/>
    <property type="evidence" value="ECO:0007669"/>
    <property type="project" value="TreeGrafter"/>
</dbReference>
<dbReference type="GO" id="GO:0033388">
    <property type="term" value="P:putrescine biosynthetic process from arginine"/>
    <property type="evidence" value="ECO:0007669"/>
    <property type="project" value="TreeGrafter"/>
</dbReference>
<dbReference type="CDD" id="cd07565">
    <property type="entry name" value="aliphatic_amidase"/>
    <property type="match status" value="1"/>
</dbReference>
<dbReference type="Gene3D" id="3.60.110.10">
    <property type="entry name" value="Carbon-nitrogen hydrolase"/>
    <property type="match status" value="1"/>
</dbReference>
<dbReference type="HAMAP" id="MF_01243">
    <property type="entry name" value="Formamidase"/>
    <property type="match status" value="1"/>
</dbReference>
<dbReference type="InterPro" id="IPR050345">
    <property type="entry name" value="Aliph_Amidase/BUP"/>
</dbReference>
<dbReference type="InterPro" id="IPR003010">
    <property type="entry name" value="C-N_Hydrolase"/>
</dbReference>
<dbReference type="InterPro" id="IPR036526">
    <property type="entry name" value="C-N_Hydrolase_sf"/>
</dbReference>
<dbReference type="InterPro" id="IPR022843">
    <property type="entry name" value="Formamidase"/>
</dbReference>
<dbReference type="NCBIfam" id="NF009803">
    <property type="entry name" value="PRK13287.1"/>
    <property type="match status" value="1"/>
</dbReference>
<dbReference type="PANTHER" id="PTHR43674:SF15">
    <property type="entry name" value="FORMAMIDASE"/>
    <property type="match status" value="1"/>
</dbReference>
<dbReference type="PANTHER" id="PTHR43674">
    <property type="entry name" value="NITRILASE C965.09-RELATED"/>
    <property type="match status" value="1"/>
</dbReference>
<dbReference type="Pfam" id="PF00795">
    <property type="entry name" value="CN_hydrolase"/>
    <property type="match status" value="1"/>
</dbReference>
<dbReference type="SUPFAM" id="SSF56317">
    <property type="entry name" value="Carbon-nitrogen hydrolase"/>
    <property type="match status" value="1"/>
</dbReference>
<dbReference type="PROSITE" id="PS50263">
    <property type="entry name" value="CN_HYDROLASE"/>
    <property type="match status" value="1"/>
</dbReference>
<proteinExistence type="inferred from homology"/>
<comment type="function">
    <text evidence="1">Is an aliphatic amidase with a restricted substrate specificity, as it only hydrolyzes formamide.</text>
</comment>
<comment type="catalytic activity">
    <reaction evidence="1">
        <text>formamide + H2O = formate + NH4(+)</text>
        <dbReference type="Rhea" id="RHEA:21948"/>
        <dbReference type="ChEBI" id="CHEBI:15377"/>
        <dbReference type="ChEBI" id="CHEBI:15740"/>
        <dbReference type="ChEBI" id="CHEBI:16397"/>
        <dbReference type="ChEBI" id="CHEBI:28938"/>
        <dbReference type="EC" id="3.5.1.49"/>
    </reaction>
</comment>
<comment type="similarity">
    <text evidence="1">Belongs to the carbon-nitrogen hydrolase superfamily. Aliphatic amidase family.</text>
</comment>
<evidence type="ECO:0000255" key="1">
    <source>
        <dbReference type="HAMAP-Rule" id="MF_01243"/>
    </source>
</evidence>
<evidence type="ECO:0000255" key="2">
    <source>
        <dbReference type="PROSITE-ProRule" id="PRU00054"/>
    </source>
</evidence>
<keyword id="KW-0378">Hydrolase</keyword>
<keyword id="KW-1185">Reference proteome</keyword>
<reference key="1">
    <citation type="journal article" date="2003" name="Nat. Biotechnol.">
        <title>The genome sequence of the entomopathogenic bacterium Photorhabdus luminescens.</title>
        <authorList>
            <person name="Duchaud E."/>
            <person name="Rusniok C."/>
            <person name="Frangeul L."/>
            <person name="Buchrieser C."/>
            <person name="Givaudan A."/>
            <person name="Taourit S."/>
            <person name="Bocs S."/>
            <person name="Boursaux-Eude C."/>
            <person name="Chandler M."/>
            <person name="Charles J.-F."/>
            <person name="Dassa E."/>
            <person name="Derose R."/>
            <person name="Derzelle S."/>
            <person name="Freyssinet G."/>
            <person name="Gaudriault S."/>
            <person name="Medigue C."/>
            <person name="Lanois A."/>
            <person name="Powell K."/>
            <person name="Siguier P."/>
            <person name="Vincent R."/>
            <person name="Wingate V."/>
            <person name="Zouine M."/>
            <person name="Glaser P."/>
            <person name="Boemare N."/>
            <person name="Danchin A."/>
            <person name="Kunst F."/>
        </authorList>
    </citation>
    <scope>NUCLEOTIDE SEQUENCE [LARGE SCALE GENOMIC DNA]</scope>
    <source>
        <strain>DSM 15139 / CIP 105565 / TT01</strain>
    </source>
</reference>
<feature type="chain" id="PRO_1000165040" description="Formamidase">
    <location>
        <begin position="1"/>
        <end position="338"/>
    </location>
</feature>
<feature type="domain" description="CN hydrolase" evidence="2">
    <location>
        <begin position="14"/>
        <end position="260"/>
    </location>
</feature>
<feature type="active site" description="Proton acceptor" evidence="1">
    <location>
        <position position="60"/>
    </location>
</feature>
<feature type="active site" description="Proton donor" evidence="1">
    <location>
        <position position="133"/>
    </location>
</feature>
<feature type="active site" description="Nucleophile" evidence="1">
    <location>
        <position position="166"/>
    </location>
</feature>